<dbReference type="EC" id="7.6.2.1"/>
<dbReference type="EMBL" id="BX855612">
    <property type="status" value="NOT_ANNOTATED_CDS"/>
    <property type="molecule type" value="Genomic_DNA"/>
</dbReference>
<dbReference type="EMBL" id="BX890563">
    <property type="status" value="NOT_ANNOTATED_CDS"/>
    <property type="molecule type" value="Genomic_DNA"/>
</dbReference>
<dbReference type="RefSeq" id="XP_009292513.1">
    <property type="nucleotide sequence ID" value="XM_009294238.4"/>
</dbReference>
<dbReference type="SMR" id="F1Q4S1"/>
<dbReference type="FunCoup" id="F1Q4S1">
    <property type="interactions" value="2137"/>
</dbReference>
<dbReference type="STRING" id="7955.ENSDARP00000084909"/>
<dbReference type="PaxDb" id="7955-ENSDARP00000114850"/>
<dbReference type="GeneID" id="568160"/>
<dbReference type="AGR" id="ZFIN:ZDB-GENE-060503-583"/>
<dbReference type="CTD" id="374868"/>
<dbReference type="ZFIN" id="ZDB-GENE-060503-583">
    <property type="gene designation" value="atp9b"/>
</dbReference>
<dbReference type="eggNOG" id="KOG0210">
    <property type="taxonomic scope" value="Eukaryota"/>
</dbReference>
<dbReference type="HOGENOM" id="CLU_000846_3_1_1"/>
<dbReference type="InParanoid" id="F1Q4S1"/>
<dbReference type="OrthoDB" id="377733at2759"/>
<dbReference type="PhylomeDB" id="F1Q4S1"/>
<dbReference type="Reactome" id="R-DRE-936837">
    <property type="pathway name" value="Ion transport by P-type ATPases"/>
</dbReference>
<dbReference type="PRO" id="PR:F1Q4S1"/>
<dbReference type="Proteomes" id="UP000000437">
    <property type="component" value="Chromosome 19"/>
</dbReference>
<dbReference type="GO" id="GO:0005768">
    <property type="term" value="C:endosome"/>
    <property type="evidence" value="ECO:0000318"/>
    <property type="project" value="GO_Central"/>
</dbReference>
<dbReference type="GO" id="GO:0005886">
    <property type="term" value="C:plasma membrane"/>
    <property type="evidence" value="ECO:0000318"/>
    <property type="project" value="GO_Central"/>
</dbReference>
<dbReference type="GO" id="GO:0005802">
    <property type="term" value="C:trans-Golgi network"/>
    <property type="evidence" value="ECO:0000318"/>
    <property type="project" value="GO_Central"/>
</dbReference>
<dbReference type="GO" id="GO:0005524">
    <property type="term" value="F:ATP binding"/>
    <property type="evidence" value="ECO:0007669"/>
    <property type="project" value="UniProtKB-KW"/>
</dbReference>
<dbReference type="GO" id="GO:0016887">
    <property type="term" value="F:ATP hydrolysis activity"/>
    <property type="evidence" value="ECO:0007669"/>
    <property type="project" value="InterPro"/>
</dbReference>
<dbReference type="GO" id="GO:0140326">
    <property type="term" value="F:ATPase-coupled intramembrane lipid transporter activity"/>
    <property type="evidence" value="ECO:0000318"/>
    <property type="project" value="GO_Central"/>
</dbReference>
<dbReference type="GO" id="GO:0000287">
    <property type="term" value="F:magnesium ion binding"/>
    <property type="evidence" value="ECO:0007669"/>
    <property type="project" value="InterPro"/>
</dbReference>
<dbReference type="GO" id="GO:0006897">
    <property type="term" value="P:endocytosis"/>
    <property type="evidence" value="ECO:0000318"/>
    <property type="project" value="GO_Central"/>
</dbReference>
<dbReference type="GO" id="GO:0045332">
    <property type="term" value="P:phospholipid translocation"/>
    <property type="evidence" value="ECO:0000318"/>
    <property type="project" value="GO_Central"/>
</dbReference>
<dbReference type="GO" id="GO:0006890">
    <property type="term" value="P:retrograde vesicle-mediated transport, Golgi to endoplasmic reticulum"/>
    <property type="evidence" value="ECO:0000318"/>
    <property type="project" value="GO_Central"/>
</dbReference>
<dbReference type="CDD" id="cd07541">
    <property type="entry name" value="P-type_ATPase_APLT_Neo1-like"/>
    <property type="match status" value="1"/>
</dbReference>
<dbReference type="FunFam" id="3.40.1110.10:FF:000008">
    <property type="entry name" value="Phospholipid-transporting ATPase"/>
    <property type="match status" value="1"/>
</dbReference>
<dbReference type="FunFam" id="3.40.50.1000:FF:000009">
    <property type="entry name" value="Phospholipid-transporting ATPase"/>
    <property type="match status" value="1"/>
</dbReference>
<dbReference type="Gene3D" id="3.40.1110.10">
    <property type="entry name" value="Calcium-transporting ATPase, cytoplasmic domain N"/>
    <property type="match status" value="1"/>
</dbReference>
<dbReference type="Gene3D" id="2.70.150.10">
    <property type="entry name" value="Calcium-transporting ATPase, cytoplasmic transduction domain A"/>
    <property type="match status" value="1"/>
</dbReference>
<dbReference type="Gene3D" id="3.40.50.1000">
    <property type="entry name" value="HAD superfamily/HAD-like"/>
    <property type="match status" value="1"/>
</dbReference>
<dbReference type="InterPro" id="IPR023299">
    <property type="entry name" value="ATPase_P-typ_cyto_dom_N"/>
</dbReference>
<dbReference type="InterPro" id="IPR018303">
    <property type="entry name" value="ATPase_P-typ_P_site"/>
</dbReference>
<dbReference type="InterPro" id="IPR023298">
    <property type="entry name" value="ATPase_P-typ_TM_dom_sf"/>
</dbReference>
<dbReference type="InterPro" id="IPR008250">
    <property type="entry name" value="ATPase_P-typ_transduc_dom_A_sf"/>
</dbReference>
<dbReference type="InterPro" id="IPR036412">
    <property type="entry name" value="HAD-like_sf"/>
</dbReference>
<dbReference type="InterPro" id="IPR023214">
    <property type="entry name" value="HAD_sf"/>
</dbReference>
<dbReference type="InterPro" id="IPR006539">
    <property type="entry name" value="P-type_ATPase_IV"/>
</dbReference>
<dbReference type="InterPro" id="IPR032631">
    <property type="entry name" value="P-type_ATPase_N"/>
</dbReference>
<dbReference type="InterPro" id="IPR001757">
    <property type="entry name" value="P_typ_ATPase"/>
</dbReference>
<dbReference type="InterPro" id="IPR032630">
    <property type="entry name" value="P_typ_ATPase_c"/>
</dbReference>
<dbReference type="InterPro" id="IPR044492">
    <property type="entry name" value="P_typ_ATPase_HD_dom"/>
</dbReference>
<dbReference type="NCBIfam" id="TIGR01652">
    <property type="entry name" value="ATPase-Plipid"/>
    <property type="match status" value="1"/>
</dbReference>
<dbReference type="NCBIfam" id="TIGR01494">
    <property type="entry name" value="ATPase_P-type"/>
    <property type="match status" value="2"/>
</dbReference>
<dbReference type="PANTHER" id="PTHR24092:SF50">
    <property type="entry name" value="PHOSPHOLIPID-TRANSPORTING ATPASE IIB-RELATED"/>
    <property type="match status" value="1"/>
</dbReference>
<dbReference type="PANTHER" id="PTHR24092">
    <property type="entry name" value="PROBABLE PHOSPHOLIPID-TRANSPORTING ATPASE"/>
    <property type="match status" value="1"/>
</dbReference>
<dbReference type="Pfam" id="PF13246">
    <property type="entry name" value="Cation_ATPase"/>
    <property type="match status" value="1"/>
</dbReference>
<dbReference type="Pfam" id="PF00122">
    <property type="entry name" value="E1-E2_ATPase"/>
    <property type="match status" value="1"/>
</dbReference>
<dbReference type="Pfam" id="PF00702">
    <property type="entry name" value="Hydrolase"/>
    <property type="match status" value="1"/>
</dbReference>
<dbReference type="Pfam" id="PF16212">
    <property type="entry name" value="PhoLip_ATPase_C"/>
    <property type="match status" value="1"/>
</dbReference>
<dbReference type="Pfam" id="PF16209">
    <property type="entry name" value="PhoLip_ATPase_N"/>
    <property type="match status" value="1"/>
</dbReference>
<dbReference type="PRINTS" id="PR00119">
    <property type="entry name" value="CATATPASE"/>
</dbReference>
<dbReference type="SFLD" id="SFLDS00003">
    <property type="entry name" value="Haloacid_Dehalogenase"/>
    <property type="match status" value="1"/>
</dbReference>
<dbReference type="SFLD" id="SFLDF00027">
    <property type="entry name" value="p-type_atpase"/>
    <property type="match status" value="1"/>
</dbReference>
<dbReference type="SUPFAM" id="SSF81653">
    <property type="entry name" value="Calcium ATPase, transduction domain A"/>
    <property type="match status" value="1"/>
</dbReference>
<dbReference type="SUPFAM" id="SSF81665">
    <property type="entry name" value="Calcium ATPase, transmembrane domain M"/>
    <property type="match status" value="1"/>
</dbReference>
<dbReference type="SUPFAM" id="SSF56784">
    <property type="entry name" value="HAD-like"/>
    <property type="match status" value="1"/>
</dbReference>
<dbReference type="SUPFAM" id="SSF81660">
    <property type="entry name" value="Metal cation-transporting ATPase, ATP-binding domain N"/>
    <property type="match status" value="1"/>
</dbReference>
<dbReference type="PROSITE" id="PS00154">
    <property type="entry name" value="ATPASE_E1_E2"/>
    <property type="match status" value="1"/>
</dbReference>
<comment type="catalytic activity">
    <reaction>
        <text>ATP + H2O + phospholipidSide 1 = ADP + phosphate + phospholipidSide 2.</text>
        <dbReference type="EC" id="7.6.2.1"/>
    </reaction>
</comment>
<comment type="cofactor">
    <cofactor evidence="4">
        <name>Mg(2+)</name>
        <dbReference type="ChEBI" id="CHEBI:18420"/>
    </cofactor>
</comment>
<comment type="subcellular location">
    <subcellularLocation>
        <location evidence="1">Golgi apparatus</location>
        <location evidence="1">trans-Golgi network membrane</location>
        <topology evidence="1">Multi-pass membrane protein</topology>
    </subcellularLocation>
</comment>
<comment type="similarity">
    <text evidence="9">Belongs to the cation transport ATPase (P-type) (TC 3.A.3) family. Type IV subfamily.</text>
</comment>
<name>ATP9B_DANRE</name>
<evidence type="ECO:0000250" key="1"/>
<evidence type="ECO:0000250" key="2">
    <source>
        <dbReference type="UniProtKB" id="P04191"/>
    </source>
</evidence>
<evidence type="ECO:0000250" key="3">
    <source>
        <dbReference type="UniProtKB" id="P39524"/>
    </source>
</evidence>
<evidence type="ECO:0000250" key="4">
    <source>
        <dbReference type="UniProtKB" id="P40527"/>
    </source>
</evidence>
<evidence type="ECO:0000250" key="5">
    <source>
        <dbReference type="UniProtKB" id="Q8NB49"/>
    </source>
</evidence>
<evidence type="ECO:0000250" key="6">
    <source>
        <dbReference type="UniProtKB" id="Q9Y2Q0"/>
    </source>
</evidence>
<evidence type="ECO:0000255" key="7"/>
<evidence type="ECO:0000256" key="8">
    <source>
        <dbReference type="SAM" id="MobiDB-lite"/>
    </source>
</evidence>
<evidence type="ECO:0000305" key="9"/>
<organism>
    <name type="scientific">Danio rerio</name>
    <name type="common">Zebrafish</name>
    <name type="synonym">Brachydanio rerio</name>
    <dbReference type="NCBI Taxonomy" id="7955"/>
    <lineage>
        <taxon>Eukaryota</taxon>
        <taxon>Metazoa</taxon>
        <taxon>Chordata</taxon>
        <taxon>Craniata</taxon>
        <taxon>Vertebrata</taxon>
        <taxon>Euteleostomi</taxon>
        <taxon>Actinopterygii</taxon>
        <taxon>Neopterygii</taxon>
        <taxon>Teleostei</taxon>
        <taxon>Ostariophysi</taxon>
        <taxon>Cypriniformes</taxon>
        <taxon>Danionidae</taxon>
        <taxon>Danioninae</taxon>
        <taxon>Danio</taxon>
    </lineage>
</organism>
<gene>
    <name type="primary">atp9b</name>
</gene>
<proteinExistence type="inferred from homology"/>
<protein>
    <recommendedName>
        <fullName>Probable phospholipid-transporting ATPase IIB</fullName>
        <ecNumber>7.6.2.1</ecNumber>
    </recommendedName>
    <alternativeName>
        <fullName>ATPase class II type 9B</fullName>
    </alternativeName>
</protein>
<sequence>MADGIPLNPVRKNLRKTAYYDASRPARYQIEDESSNLDEMPLMMSEEAFENDESDYQTLPRARVSQRRRGLGWFLCGGWKVLCSSCCECLVHTCRRKKELKARTVWLGHPEKCEEKYPKNAIKNQKYNIVTFVPGVLYQQFKFFLNLYFLVVACSQFVPSLKIGYLYTYWAPLGFVLAVTMVREAVDEVRRCRRDKEMNSQLYSKLTVRGKVQVKSSDIQVGDLIIVEKNQRIPADMIFLRTSEKTGSCFIRTDQLDGETDWKLRIGVACTQRLPALGDLFSISAYVYVQKPQLDIHSFEGNFTREDCDPPIHESLSIENTLWASTVVASGTVIGVVIYTGKEMRSVMNTSQSKNKVGLLDLELNRLTKALFLAQVVLSVVMVALQGFLGPWFRNLFRFVVLFSYIIPISLRVNLDMGKSAYGWMIMKDENIPGTVVRTSTIPEELGRLVYLLTDKTGTLTQNEMVFKRLHLGTVSYGTDTMDEIQSHIIQSYAQVSSAQSNGSSASSTPSRKPQPPAPKVRKSVSSRIHEAVKAIALCHNVTPVYESRVNGANAEPESTEADQDFSDDNRTYQASSPDEVALVRWTESVGLTLVNRDLTSLQLKTPAGQILTYYILQIFPFTSESKRMGIIVREEATGDITFYMKGADVAMASIVQYNDWLEEECGNMAREGLRTLVVAKKSLTEEQYQDFENRYNQAKLSIHDRNLKVAAVVESLEREMELLCLTGVEDQLQADVRPTLELLRNAGIKIWMLTGDKLETATCIAKSSHLVSRNQDIHVFKPVSNRGEAHLELNAFRRKHDCALVISGDSLEVCLRYYEHEFVELACQCPAVVCCRCSPTQKAQIVRLLQQHTANRTCAIGDGGNDVSMIQAADCGIGIEGKEGKQASLAADFSITQFKHIGRLLMVHGRNSYKRSAALGQFVMHRGMIISTMQAVFSSIFYFASVPLYQGFLMVGYATIYTMFPVFSLVLDQDVKPEMALLYPELYKDLTKGRSLSFKTFLIWVLISIYQGGILMYGALVLFDQEFVHVVAISFTALILTELLMVALTIRTWHWLMVVAQLISLACYLASLAFLNEYFDLSFITTRVFLWKVCVITLVSCLPLYIIKYLKRKFSPPSYSKLSS</sequence>
<keyword id="KW-0067">ATP-binding</keyword>
<keyword id="KW-0333">Golgi apparatus</keyword>
<keyword id="KW-0445">Lipid transport</keyword>
<keyword id="KW-0460">Magnesium</keyword>
<keyword id="KW-0472">Membrane</keyword>
<keyword id="KW-0479">Metal-binding</keyword>
<keyword id="KW-0547">Nucleotide-binding</keyword>
<keyword id="KW-0597">Phosphoprotein</keyword>
<keyword id="KW-1185">Reference proteome</keyword>
<keyword id="KW-1278">Translocase</keyword>
<keyword id="KW-0812">Transmembrane</keyword>
<keyword id="KW-1133">Transmembrane helix</keyword>
<keyword id="KW-0813">Transport</keyword>
<accession>F1Q4S1</accession>
<reference key="1">
    <citation type="journal article" date="2013" name="Nature">
        <title>The zebrafish reference genome sequence and its relationship to the human genome.</title>
        <authorList>
            <person name="Howe K."/>
            <person name="Clark M.D."/>
            <person name="Torroja C.F."/>
            <person name="Torrance J."/>
            <person name="Berthelot C."/>
            <person name="Muffato M."/>
            <person name="Collins J.E."/>
            <person name="Humphray S."/>
            <person name="McLaren K."/>
            <person name="Matthews L."/>
            <person name="McLaren S."/>
            <person name="Sealy I."/>
            <person name="Caccamo M."/>
            <person name="Churcher C."/>
            <person name="Scott C."/>
            <person name="Barrett J.C."/>
            <person name="Koch R."/>
            <person name="Rauch G.J."/>
            <person name="White S."/>
            <person name="Chow W."/>
            <person name="Kilian B."/>
            <person name="Quintais L.T."/>
            <person name="Guerra-Assuncao J.A."/>
            <person name="Zhou Y."/>
            <person name="Gu Y."/>
            <person name="Yen J."/>
            <person name="Vogel J.H."/>
            <person name="Eyre T."/>
            <person name="Redmond S."/>
            <person name="Banerjee R."/>
            <person name="Chi J."/>
            <person name="Fu B."/>
            <person name="Langley E."/>
            <person name="Maguire S.F."/>
            <person name="Laird G.K."/>
            <person name="Lloyd D."/>
            <person name="Kenyon E."/>
            <person name="Donaldson S."/>
            <person name="Sehra H."/>
            <person name="Almeida-King J."/>
            <person name="Loveland J."/>
            <person name="Trevanion S."/>
            <person name="Jones M."/>
            <person name="Quail M."/>
            <person name="Willey D."/>
            <person name="Hunt A."/>
            <person name="Burton J."/>
            <person name="Sims S."/>
            <person name="McLay K."/>
            <person name="Plumb B."/>
            <person name="Davis J."/>
            <person name="Clee C."/>
            <person name="Oliver K."/>
            <person name="Clark R."/>
            <person name="Riddle C."/>
            <person name="Elliot D."/>
            <person name="Threadgold G."/>
            <person name="Harden G."/>
            <person name="Ware D."/>
            <person name="Begum S."/>
            <person name="Mortimore B."/>
            <person name="Kerry G."/>
            <person name="Heath P."/>
            <person name="Phillimore B."/>
            <person name="Tracey A."/>
            <person name="Corby N."/>
            <person name="Dunn M."/>
            <person name="Johnson C."/>
            <person name="Wood J."/>
            <person name="Clark S."/>
            <person name="Pelan S."/>
            <person name="Griffiths G."/>
            <person name="Smith M."/>
            <person name="Glithero R."/>
            <person name="Howden P."/>
            <person name="Barker N."/>
            <person name="Lloyd C."/>
            <person name="Stevens C."/>
            <person name="Harley J."/>
            <person name="Holt K."/>
            <person name="Panagiotidis G."/>
            <person name="Lovell J."/>
            <person name="Beasley H."/>
            <person name="Henderson C."/>
            <person name="Gordon D."/>
            <person name="Auger K."/>
            <person name="Wright D."/>
            <person name="Collins J."/>
            <person name="Raisen C."/>
            <person name="Dyer L."/>
            <person name="Leung K."/>
            <person name="Robertson L."/>
            <person name="Ambridge K."/>
            <person name="Leongamornlert D."/>
            <person name="McGuire S."/>
            <person name="Gilderthorp R."/>
            <person name="Griffiths C."/>
            <person name="Manthravadi D."/>
            <person name="Nichol S."/>
            <person name="Barker G."/>
            <person name="Whitehead S."/>
            <person name="Kay M."/>
            <person name="Brown J."/>
            <person name="Murnane C."/>
            <person name="Gray E."/>
            <person name="Humphries M."/>
            <person name="Sycamore N."/>
            <person name="Barker D."/>
            <person name="Saunders D."/>
            <person name="Wallis J."/>
            <person name="Babbage A."/>
            <person name="Hammond S."/>
            <person name="Mashreghi-Mohammadi M."/>
            <person name="Barr L."/>
            <person name="Martin S."/>
            <person name="Wray P."/>
            <person name="Ellington A."/>
            <person name="Matthews N."/>
            <person name="Ellwood M."/>
            <person name="Woodmansey R."/>
            <person name="Clark G."/>
            <person name="Cooper J."/>
            <person name="Tromans A."/>
            <person name="Grafham D."/>
            <person name="Skuce C."/>
            <person name="Pandian R."/>
            <person name="Andrews R."/>
            <person name="Harrison E."/>
            <person name="Kimberley A."/>
            <person name="Garnett J."/>
            <person name="Fosker N."/>
            <person name="Hall R."/>
            <person name="Garner P."/>
            <person name="Kelly D."/>
            <person name="Bird C."/>
            <person name="Palmer S."/>
            <person name="Gehring I."/>
            <person name="Berger A."/>
            <person name="Dooley C.M."/>
            <person name="Ersan-Urun Z."/>
            <person name="Eser C."/>
            <person name="Geiger H."/>
            <person name="Geisler M."/>
            <person name="Karotki L."/>
            <person name="Kirn A."/>
            <person name="Konantz J."/>
            <person name="Konantz M."/>
            <person name="Oberlander M."/>
            <person name="Rudolph-Geiger S."/>
            <person name="Teucke M."/>
            <person name="Lanz C."/>
            <person name="Raddatz G."/>
            <person name="Osoegawa K."/>
            <person name="Zhu B."/>
            <person name="Rapp A."/>
            <person name="Widaa S."/>
            <person name="Langford C."/>
            <person name="Yang F."/>
            <person name="Schuster S.C."/>
            <person name="Carter N.P."/>
            <person name="Harrow J."/>
            <person name="Ning Z."/>
            <person name="Herrero J."/>
            <person name="Searle S.M."/>
            <person name="Enright A."/>
            <person name="Geisler R."/>
            <person name="Plasterk R.H."/>
            <person name="Lee C."/>
            <person name="Westerfield M."/>
            <person name="de Jong P.J."/>
            <person name="Zon L.I."/>
            <person name="Postlethwait J.H."/>
            <person name="Nusslein-Volhard C."/>
            <person name="Hubbard T.J."/>
            <person name="Roest Crollius H."/>
            <person name="Rogers J."/>
            <person name="Stemple D.L."/>
        </authorList>
    </citation>
    <scope>NUCLEOTIDE SEQUENCE [LARGE SCALE GENOMIC DNA]</scope>
    <source>
        <strain>Tuebingen</strain>
    </source>
</reference>
<feature type="chain" id="PRO_0000416696" description="Probable phospholipid-transporting ATPase IIB">
    <location>
        <begin position="1"/>
        <end position="1125"/>
    </location>
</feature>
<feature type="topological domain" description="Cytoplasmic" evidence="7">
    <location>
        <begin position="1"/>
        <end position="131"/>
    </location>
</feature>
<feature type="transmembrane region" description="Helical" evidence="7">
    <location>
        <begin position="132"/>
        <end position="152"/>
    </location>
</feature>
<feature type="topological domain" description="Extracellular" evidence="7">
    <location>
        <begin position="153"/>
        <end position="161"/>
    </location>
</feature>
<feature type="transmembrane region" description="Helical" evidence="7">
    <location>
        <begin position="162"/>
        <end position="182"/>
    </location>
</feature>
<feature type="topological domain" description="Cytoplasmic" evidence="7">
    <location>
        <begin position="183"/>
        <end position="369"/>
    </location>
</feature>
<feature type="transmembrane region" description="Helical" evidence="7">
    <location>
        <begin position="370"/>
        <end position="390"/>
    </location>
</feature>
<feature type="topological domain" description="Extracellular" evidence="7">
    <location>
        <begin position="391"/>
        <end position="395"/>
    </location>
</feature>
<feature type="transmembrane region" description="Helical" evidence="7">
    <location>
        <begin position="396"/>
        <end position="415"/>
    </location>
</feature>
<feature type="topological domain" description="Cytoplasmic" evidence="7">
    <location>
        <begin position="416"/>
        <end position="928"/>
    </location>
</feature>
<feature type="transmembrane region" description="Helical" evidence="7">
    <location>
        <begin position="929"/>
        <end position="949"/>
    </location>
</feature>
<feature type="topological domain" description="Extracellular" evidence="7">
    <location>
        <begin position="950"/>
        <end position="951"/>
    </location>
</feature>
<feature type="transmembrane region" description="Helical" evidence="7">
    <location>
        <begin position="952"/>
        <end position="972"/>
    </location>
</feature>
<feature type="topological domain" description="Cytoplasmic" evidence="7">
    <location>
        <begin position="973"/>
        <end position="1001"/>
    </location>
</feature>
<feature type="transmembrane region" description="Helical" evidence="7">
    <location>
        <begin position="1002"/>
        <end position="1022"/>
    </location>
</feature>
<feature type="topological domain" description="Extracellular" evidence="7">
    <location>
        <begin position="1023"/>
        <end position="1030"/>
    </location>
</feature>
<feature type="transmembrane region" description="Helical" evidence="7">
    <location>
        <begin position="1031"/>
        <end position="1051"/>
    </location>
</feature>
<feature type="topological domain" description="Cytoplasmic" evidence="7">
    <location>
        <begin position="1052"/>
        <end position="1055"/>
    </location>
</feature>
<feature type="transmembrane region" description="Helical" evidence="7">
    <location>
        <begin position="1056"/>
        <end position="1076"/>
    </location>
</feature>
<feature type="topological domain" description="Extracellular" evidence="7">
    <location>
        <begin position="1077"/>
        <end position="1088"/>
    </location>
</feature>
<feature type="transmembrane region" description="Helical" evidence="7">
    <location>
        <begin position="1089"/>
        <end position="1109"/>
    </location>
</feature>
<feature type="topological domain" description="Cytoplasmic" evidence="7">
    <location>
        <begin position="1110"/>
        <end position="1125"/>
    </location>
</feature>
<feature type="region of interest" description="Disordered" evidence="8">
    <location>
        <begin position="500"/>
        <end position="525"/>
    </location>
</feature>
<feature type="region of interest" description="Disordered" evidence="8">
    <location>
        <begin position="552"/>
        <end position="574"/>
    </location>
</feature>
<feature type="compositionally biased region" description="Low complexity" evidence="8">
    <location>
        <begin position="500"/>
        <end position="511"/>
    </location>
</feature>
<feature type="compositionally biased region" description="Acidic residues" evidence="8">
    <location>
        <begin position="558"/>
        <end position="567"/>
    </location>
</feature>
<feature type="active site" description="4-aspartylphosphate intermediate" evidence="4">
    <location>
        <position position="455"/>
    </location>
</feature>
<feature type="binding site" evidence="6">
    <location>
        <position position="455"/>
    </location>
    <ligand>
        <name>ATP</name>
        <dbReference type="ChEBI" id="CHEBI:30616"/>
    </ligand>
</feature>
<feature type="binding site" evidence="6">
    <location>
        <position position="455"/>
    </location>
    <ligand>
        <name>Mg(2+)</name>
        <dbReference type="ChEBI" id="CHEBI:18420"/>
    </ligand>
</feature>
<feature type="binding site" evidence="6">
    <location>
        <position position="456"/>
    </location>
    <ligand>
        <name>ATP</name>
        <dbReference type="ChEBI" id="CHEBI:30616"/>
    </ligand>
</feature>
<feature type="binding site" evidence="4">
    <location>
        <position position="457"/>
    </location>
    <ligand>
        <name>ATP</name>
        <dbReference type="ChEBI" id="CHEBI:30616"/>
    </ligand>
</feature>
<feature type="binding site" evidence="6">
    <location>
        <position position="457"/>
    </location>
    <ligand>
        <name>Mg(2+)</name>
        <dbReference type="ChEBI" id="CHEBI:18420"/>
    </ligand>
</feature>
<feature type="binding site" evidence="2">
    <location>
        <position position="580"/>
    </location>
    <ligand>
        <name>ATP</name>
        <dbReference type="ChEBI" id="CHEBI:30616"/>
    </ligand>
</feature>
<feature type="binding site" evidence="6">
    <location>
        <position position="622"/>
    </location>
    <ligand>
        <name>ATP</name>
        <dbReference type="ChEBI" id="CHEBI:30616"/>
    </ligand>
</feature>
<feature type="binding site" evidence="4">
    <location>
        <position position="627"/>
    </location>
    <ligand>
        <name>ATP</name>
        <dbReference type="ChEBI" id="CHEBI:30616"/>
    </ligand>
</feature>
<feature type="binding site" evidence="2">
    <location>
        <position position="646"/>
    </location>
    <ligand>
        <name>ATP</name>
        <dbReference type="ChEBI" id="CHEBI:30616"/>
    </ligand>
</feature>
<feature type="binding site" evidence="2">
    <location>
        <position position="675"/>
    </location>
    <ligand>
        <name>ATP</name>
        <dbReference type="ChEBI" id="CHEBI:30616"/>
    </ligand>
</feature>
<feature type="binding site" evidence="3">
    <location>
        <position position="676"/>
    </location>
    <ligand>
        <name>ATP</name>
        <dbReference type="ChEBI" id="CHEBI:30616"/>
    </ligand>
</feature>
<feature type="binding site" evidence="2">
    <location>
        <position position="755"/>
    </location>
    <ligand>
        <name>ATP</name>
        <dbReference type="ChEBI" id="CHEBI:30616"/>
    </ligand>
</feature>
<feature type="binding site" evidence="2">
    <location>
        <position position="756"/>
    </location>
    <ligand>
        <name>ATP</name>
        <dbReference type="ChEBI" id="CHEBI:30616"/>
    </ligand>
</feature>
<feature type="binding site" evidence="2">
    <location>
        <position position="757"/>
    </location>
    <ligand>
        <name>ATP</name>
        <dbReference type="ChEBI" id="CHEBI:30616"/>
    </ligand>
</feature>
<feature type="binding site" evidence="2">
    <location>
        <position position="837"/>
    </location>
    <ligand>
        <name>ATP</name>
        <dbReference type="ChEBI" id="CHEBI:30616"/>
    </ligand>
</feature>
<feature type="binding site" evidence="2">
    <location>
        <position position="843"/>
    </location>
    <ligand>
        <name>ATP</name>
        <dbReference type="ChEBI" id="CHEBI:30616"/>
    </ligand>
</feature>
<feature type="binding site" evidence="6">
    <location>
        <position position="863"/>
    </location>
    <ligand>
        <name>Mg(2+)</name>
        <dbReference type="ChEBI" id="CHEBI:18420"/>
    </ligand>
</feature>
<feature type="binding site" evidence="6">
    <location>
        <position position="866"/>
    </location>
    <ligand>
        <name>ATP</name>
        <dbReference type="ChEBI" id="CHEBI:30616"/>
    </ligand>
</feature>
<feature type="binding site" evidence="2">
    <location>
        <position position="867"/>
    </location>
    <ligand>
        <name>ATP</name>
        <dbReference type="ChEBI" id="CHEBI:30616"/>
    </ligand>
</feature>
<feature type="binding site" evidence="5">
    <location>
        <position position="867"/>
    </location>
    <ligand>
        <name>Mg(2+)</name>
        <dbReference type="ChEBI" id="CHEBI:18420"/>
    </ligand>
</feature>